<dbReference type="EC" id="3.1.-.-" evidence="1"/>
<dbReference type="EMBL" id="CP000053">
    <property type="protein sequence ID" value="AAY61307.1"/>
    <property type="molecule type" value="Genomic_DNA"/>
</dbReference>
<dbReference type="SMR" id="Q4UMB0"/>
<dbReference type="STRING" id="315456.RF_0456"/>
<dbReference type="KEGG" id="rfe:RF_0456"/>
<dbReference type="eggNOG" id="COG1487">
    <property type="taxonomic scope" value="Bacteria"/>
</dbReference>
<dbReference type="HOGENOM" id="CLU_118482_7_0_5"/>
<dbReference type="OrthoDB" id="7161000at2"/>
<dbReference type="Proteomes" id="UP000008548">
    <property type="component" value="Chromosome"/>
</dbReference>
<dbReference type="GO" id="GO:0000287">
    <property type="term" value="F:magnesium ion binding"/>
    <property type="evidence" value="ECO:0007669"/>
    <property type="project" value="UniProtKB-UniRule"/>
</dbReference>
<dbReference type="GO" id="GO:0004540">
    <property type="term" value="F:RNA nuclease activity"/>
    <property type="evidence" value="ECO:0007669"/>
    <property type="project" value="InterPro"/>
</dbReference>
<dbReference type="CDD" id="cd18733">
    <property type="entry name" value="PIN_RfVapC1-like"/>
    <property type="match status" value="1"/>
</dbReference>
<dbReference type="Gene3D" id="3.40.50.1010">
    <property type="entry name" value="5'-nuclease"/>
    <property type="match status" value="1"/>
</dbReference>
<dbReference type="HAMAP" id="MF_00265">
    <property type="entry name" value="VapC_Nob1"/>
    <property type="match status" value="1"/>
</dbReference>
<dbReference type="InterPro" id="IPR029060">
    <property type="entry name" value="PIN-like_dom_sf"/>
</dbReference>
<dbReference type="InterPro" id="IPR002716">
    <property type="entry name" value="PIN_dom"/>
</dbReference>
<dbReference type="InterPro" id="IPR050556">
    <property type="entry name" value="Type_II_TA_system_RNase"/>
</dbReference>
<dbReference type="InterPro" id="IPR022907">
    <property type="entry name" value="VapC_family"/>
</dbReference>
<dbReference type="PANTHER" id="PTHR33653">
    <property type="entry name" value="RIBONUCLEASE VAPC2"/>
    <property type="match status" value="1"/>
</dbReference>
<dbReference type="PANTHER" id="PTHR33653:SF1">
    <property type="entry name" value="RIBONUCLEASE VAPC2"/>
    <property type="match status" value="1"/>
</dbReference>
<dbReference type="Pfam" id="PF01850">
    <property type="entry name" value="PIN"/>
    <property type="match status" value="1"/>
</dbReference>
<dbReference type="SUPFAM" id="SSF88723">
    <property type="entry name" value="PIN domain-like"/>
    <property type="match status" value="1"/>
</dbReference>
<reference key="1">
    <citation type="journal article" date="2005" name="PLoS Biol.">
        <title>The genome sequence of Rickettsia felis identifies the first putative conjugative plasmid in an obligate intracellular parasite.</title>
        <authorList>
            <person name="Ogata H."/>
            <person name="Renesto P."/>
            <person name="Audic S."/>
            <person name="Robert C."/>
            <person name="Blanc G."/>
            <person name="Fournier P.-E."/>
            <person name="Parinello H."/>
            <person name="Claverie J.-M."/>
            <person name="Raoult D."/>
        </authorList>
    </citation>
    <scope>NUCLEOTIDE SEQUENCE [LARGE SCALE GENOMIC DNA]</scope>
    <source>
        <strain evidence="3">ATCC VR-1525 / URRWXCal2</strain>
    </source>
</reference>
<reference key="2">
    <citation type="journal article" date="2011" name="PLoS ONE">
        <title>Effect of rickettsial toxin VapC on its eukaryotic host.</title>
        <authorList>
            <person name="Audoly G."/>
            <person name="Vincentelli R."/>
            <person name="Edouard S."/>
            <person name="Georgiades K."/>
            <person name="Mediannikov O."/>
            <person name="Gimenez G."/>
            <person name="Socolovschi C."/>
            <person name="Mege J.L."/>
            <person name="Cambillau C."/>
            <person name="Raoult D."/>
        </authorList>
    </citation>
    <scope>FUNCTION</scope>
    <scope>EXPRESSION IN E.COLI</scope>
    <source>
        <strain>ATCC VR-1525 / URRWXCal2</strain>
    </source>
</reference>
<protein>
    <recommendedName>
        <fullName evidence="1">Ribonuclease VapC1</fullName>
        <shortName evidence="1">RNase VapC1</shortName>
        <ecNumber evidence="1">3.1.-.-</ecNumber>
    </recommendedName>
    <alternativeName>
        <fullName evidence="1">Toxin VapC1</fullName>
    </alternativeName>
</protein>
<organism>
    <name type="scientific">Rickettsia felis (strain ATCC VR-1525 / URRWXCal2)</name>
    <name type="common">Rickettsia azadi</name>
    <dbReference type="NCBI Taxonomy" id="315456"/>
    <lineage>
        <taxon>Bacteria</taxon>
        <taxon>Pseudomonadati</taxon>
        <taxon>Pseudomonadota</taxon>
        <taxon>Alphaproteobacteria</taxon>
        <taxon>Rickettsiales</taxon>
        <taxon>Rickettsiaceae</taxon>
        <taxon>Rickettsieae</taxon>
        <taxon>Rickettsia</taxon>
        <taxon>spotted fever group</taxon>
    </lineage>
</organism>
<feature type="chain" id="PRO_0000432236" description="Ribonuclease VapC1">
    <location>
        <begin position="1"/>
        <end position="134"/>
    </location>
</feature>
<feature type="domain" description="PINc" evidence="1">
    <location>
        <begin position="4"/>
        <end position="123"/>
    </location>
</feature>
<feature type="binding site" evidence="1">
    <location>
        <position position="6"/>
    </location>
    <ligand>
        <name>Mg(2+)</name>
        <dbReference type="ChEBI" id="CHEBI:18420"/>
    </ligand>
</feature>
<feature type="binding site" evidence="1">
    <location>
        <position position="97"/>
    </location>
    <ligand>
        <name>Mg(2+)</name>
        <dbReference type="ChEBI" id="CHEBI:18420"/>
    </ligand>
</feature>
<comment type="function">
    <text evidence="1 2">Toxic component of a type II toxin-antitoxin (TA) system. Has ssRNase activity. Upon expression in E.coli inhibits growth in liquid culture; this toxic effect is neutralized by coexpression with cognate antitoxin VapB1. Its RNase activity is partially inhibited in vitro by VapB1 (PubMed:22046301).</text>
</comment>
<comment type="cofactor">
    <cofactor evidence="1">
        <name>Mg(2+)</name>
        <dbReference type="ChEBI" id="CHEBI:18420"/>
    </cofactor>
</comment>
<comment type="similarity">
    <text evidence="1">Belongs to the PINc/VapC protein family.</text>
</comment>
<sequence length="134" mass="15177">MGLIIDTSIIIALERGKVSTKQWSHYGQAYISPIVLTELLIGVDRVNNENKRIKCLAFIEYVKSLFTILPFGIEEVYTYARIINDLYKQRITIGTHDMLIAATAITHGYSLLTLNVKDFKRIQGLEVLTVSSKD</sequence>
<proteinExistence type="inferred from homology"/>
<evidence type="ECO:0000255" key="1">
    <source>
        <dbReference type="HAMAP-Rule" id="MF_00265"/>
    </source>
</evidence>
<evidence type="ECO:0000269" key="2">
    <source>
    </source>
</evidence>
<evidence type="ECO:0000312" key="3">
    <source>
        <dbReference type="Proteomes" id="UP000008548"/>
    </source>
</evidence>
<name>VAPC1_RICFE</name>
<gene>
    <name evidence="1" type="primary">vapC1</name>
    <name type="ordered locus">RF_0456</name>
</gene>
<keyword id="KW-0378">Hydrolase</keyword>
<keyword id="KW-0460">Magnesium</keyword>
<keyword id="KW-0479">Metal-binding</keyword>
<keyword id="KW-0540">Nuclease</keyword>
<keyword id="KW-1277">Toxin-antitoxin system</keyword>
<accession>Q4UMB0</accession>